<feature type="chain" id="PRO_0000374282" description="tRNA-2-methylthio-N(6)-dimethylallyladenosine synthase">
    <location>
        <begin position="1"/>
        <end position="474"/>
    </location>
</feature>
<feature type="domain" description="MTTase N-terminal" evidence="1">
    <location>
        <begin position="3"/>
        <end position="120"/>
    </location>
</feature>
<feature type="domain" description="Radical SAM core" evidence="2">
    <location>
        <begin position="143"/>
        <end position="375"/>
    </location>
</feature>
<feature type="domain" description="TRAM" evidence="1">
    <location>
        <begin position="378"/>
        <end position="441"/>
    </location>
</feature>
<feature type="binding site" evidence="1">
    <location>
        <position position="12"/>
    </location>
    <ligand>
        <name>[4Fe-4S] cluster</name>
        <dbReference type="ChEBI" id="CHEBI:49883"/>
        <label>1</label>
    </ligand>
</feature>
<feature type="binding site" evidence="1">
    <location>
        <position position="49"/>
    </location>
    <ligand>
        <name>[4Fe-4S] cluster</name>
        <dbReference type="ChEBI" id="CHEBI:49883"/>
        <label>1</label>
    </ligand>
</feature>
<feature type="binding site" evidence="1">
    <location>
        <position position="83"/>
    </location>
    <ligand>
        <name>[4Fe-4S] cluster</name>
        <dbReference type="ChEBI" id="CHEBI:49883"/>
        <label>1</label>
    </ligand>
</feature>
<feature type="binding site" evidence="1">
    <location>
        <position position="157"/>
    </location>
    <ligand>
        <name>[4Fe-4S] cluster</name>
        <dbReference type="ChEBI" id="CHEBI:49883"/>
        <label>2</label>
        <note>4Fe-4S-S-AdoMet</note>
    </ligand>
</feature>
<feature type="binding site" evidence="1">
    <location>
        <position position="161"/>
    </location>
    <ligand>
        <name>[4Fe-4S] cluster</name>
        <dbReference type="ChEBI" id="CHEBI:49883"/>
        <label>2</label>
        <note>4Fe-4S-S-AdoMet</note>
    </ligand>
</feature>
<feature type="binding site" evidence="1">
    <location>
        <position position="164"/>
    </location>
    <ligand>
        <name>[4Fe-4S] cluster</name>
        <dbReference type="ChEBI" id="CHEBI:49883"/>
        <label>2</label>
        <note>4Fe-4S-S-AdoMet</note>
    </ligand>
</feature>
<protein>
    <recommendedName>
        <fullName evidence="1">tRNA-2-methylthio-N(6)-dimethylallyladenosine synthase</fullName>
        <ecNumber evidence="1">2.8.4.3</ecNumber>
    </recommendedName>
    <alternativeName>
        <fullName evidence="1">(Dimethylallyl)adenosine tRNA methylthiotransferase MiaB</fullName>
    </alternativeName>
    <alternativeName>
        <fullName evidence="1">tRNA-i(6)A37 methylthiotransferase</fullName>
    </alternativeName>
</protein>
<reference key="1">
    <citation type="submission" date="2008-02" db="EMBL/GenBank/DDBJ databases">
        <title>Complete sequence of Escherichia coli C str. ATCC 8739.</title>
        <authorList>
            <person name="Copeland A."/>
            <person name="Lucas S."/>
            <person name="Lapidus A."/>
            <person name="Glavina del Rio T."/>
            <person name="Dalin E."/>
            <person name="Tice H."/>
            <person name="Bruce D."/>
            <person name="Goodwin L."/>
            <person name="Pitluck S."/>
            <person name="Kiss H."/>
            <person name="Brettin T."/>
            <person name="Detter J.C."/>
            <person name="Han C."/>
            <person name="Kuske C.R."/>
            <person name="Schmutz J."/>
            <person name="Larimer F."/>
            <person name="Land M."/>
            <person name="Hauser L."/>
            <person name="Kyrpides N."/>
            <person name="Mikhailova N."/>
            <person name="Ingram L."/>
            <person name="Richardson P."/>
        </authorList>
    </citation>
    <scope>NUCLEOTIDE SEQUENCE [LARGE SCALE GENOMIC DNA]</scope>
    <source>
        <strain>ATCC 8739 / DSM 1576 / NBRC 3972 / NCIMB 8545 / WDCM 00012 / Crooks</strain>
    </source>
</reference>
<dbReference type="EC" id="2.8.4.3" evidence="1"/>
<dbReference type="EMBL" id="CP000946">
    <property type="protein sequence ID" value="ACA78609.1"/>
    <property type="molecule type" value="Genomic_DNA"/>
</dbReference>
<dbReference type="RefSeq" id="WP_000162740.1">
    <property type="nucleotide sequence ID" value="NZ_MTFT01000005.1"/>
</dbReference>
<dbReference type="SMR" id="B1IYE7"/>
<dbReference type="GeneID" id="86863171"/>
<dbReference type="KEGG" id="ecl:EcolC_2984"/>
<dbReference type="HOGENOM" id="CLU_018697_2_0_6"/>
<dbReference type="GO" id="GO:0005829">
    <property type="term" value="C:cytosol"/>
    <property type="evidence" value="ECO:0007669"/>
    <property type="project" value="TreeGrafter"/>
</dbReference>
<dbReference type="GO" id="GO:0051539">
    <property type="term" value="F:4 iron, 4 sulfur cluster binding"/>
    <property type="evidence" value="ECO:0007669"/>
    <property type="project" value="UniProtKB-UniRule"/>
</dbReference>
<dbReference type="GO" id="GO:0046872">
    <property type="term" value="F:metal ion binding"/>
    <property type="evidence" value="ECO:0007669"/>
    <property type="project" value="UniProtKB-KW"/>
</dbReference>
<dbReference type="GO" id="GO:0035597">
    <property type="term" value="F:N6-isopentenyladenosine methylthiotransferase activity"/>
    <property type="evidence" value="ECO:0007669"/>
    <property type="project" value="TreeGrafter"/>
</dbReference>
<dbReference type="CDD" id="cd01335">
    <property type="entry name" value="Radical_SAM"/>
    <property type="match status" value="1"/>
</dbReference>
<dbReference type="FunFam" id="3.40.50.12160:FF:000001">
    <property type="entry name" value="tRNA-2-methylthio-N(6)-dimethylallyladenosine synthase"/>
    <property type="match status" value="1"/>
</dbReference>
<dbReference type="FunFam" id="3.80.30.20:FF:000001">
    <property type="entry name" value="tRNA-2-methylthio-N(6)-dimethylallyladenosine synthase 2"/>
    <property type="match status" value="1"/>
</dbReference>
<dbReference type="Gene3D" id="3.40.50.12160">
    <property type="entry name" value="Methylthiotransferase, N-terminal domain"/>
    <property type="match status" value="1"/>
</dbReference>
<dbReference type="Gene3D" id="3.80.30.20">
    <property type="entry name" value="tm_1862 like domain"/>
    <property type="match status" value="1"/>
</dbReference>
<dbReference type="HAMAP" id="MF_01864">
    <property type="entry name" value="tRNA_metthiotr_MiaB"/>
    <property type="match status" value="1"/>
</dbReference>
<dbReference type="InterPro" id="IPR006638">
    <property type="entry name" value="Elp3/MiaA/NifB-like_rSAM"/>
</dbReference>
<dbReference type="InterPro" id="IPR005839">
    <property type="entry name" value="Methylthiotransferase"/>
</dbReference>
<dbReference type="InterPro" id="IPR020612">
    <property type="entry name" value="Methylthiotransferase_CS"/>
</dbReference>
<dbReference type="InterPro" id="IPR013848">
    <property type="entry name" value="Methylthiotransferase_N"/>
</dbReference>
<dbReference type="InterPro" id="IPR038135">
    <property type="entry name" value="Methylthiotransferase_N_sf"/>
</dbReference>
<dbReference type="InterPro" id="IPR006463">
    <property type="entry name" value="MiaB_methiolase"/>
</dbReference>
<dbReference type="InterPro" id="IPR007197">
    <property type="entry name" value="rSAM"/>
</dbReference>
<dbReference type="InterPro" id="IPR023404">
    <property type="entry name" value="rSAM_horseshoe"/>
</dbReference>
<dbReference type="InterPro" id="IPR002792">
    <property type="entry name" value="TRAM_dom"/>
</dbReference>
<dbReference type="NCBIfam" id="TIGR01574">
    <property type="entry name" value="miaB-methiolase"/>
    <property type="match status" value="1"/>
</dbReference>
<dbReference type="NCBIfam" id="TIGR00089">
    <property type="entry name" value="MiaB/RimO family radical SAM methylthiotransferase"/>
    <property type="match status" value="1"/>
</dbReference>
<dbReference type="PANTHER" id="PTHR43020">
    <property type="entry name" value="CDK5 REGULATORY SUBUNIT-ASSOCIATED PROTEIN 1"/>
    <property type="match status" value="1"/>
</dbReference>
<dbReference type="PANTHER" id="PTHR43020:SF2">
    <property type="entry name" value="MITOCHONDRIAL TRNA METHYLTHIOTRANSFERASE CDK5RAP1"/>
    <property type="match status" value="1"/>
</dbReference>
<dbReference type="Pfam" id="PF04055">
    <property type="entry name" value="Radical_SAM"/>
    <property type="match status" value="1"/>
</dbReference>
<dbReference type="Pfam" id="PF01938">
    <property type="entry name" value="TRAM"/>
    <property type="match status" value="1"/>
</dbReference>
<dbReference type="Pfam" id="PF00919">
    <property type="entry name" value="UPF0004"/>
    <property type="match status" value="1"/>
</dbReference>
<dbReference type="SFLD" id="SFLDF00273">
    <property type="entry name" value="(dimethylallyl)adenosine_tRNA"/>
    <property type="match status" value="1"/>
</dbReference>
<dbReference type="SFLD" id="SFLDG01082">
    <property type="entry name" value="B12-binding_domain_containing"/>
    <property type="match status" value="1"/>
</dbReference>
<dbReference type="SFLD" id="SFLDS00029">
    <property type="entry name" value="Radical_SAM"/>
    <property type="match status" value="1"/>
</dbReference>
<dbReference type="SMART" id="SM00729">
    <property type="entry name" value="Elp3"/>
    <property type="match status" value="1"/>
</dbReference>
<dbReference type="SUPFAM" id="SSF102114">
    <property type="entry name" value="Radical SAM enzymes"/>
    <property type="match status" value="1"/>
</dbReference>
<dbReference type="PROSITE" id="PS51449">
    <property type="entry name" value="MTTASE_N"/>
    <property type="match status" value="1"/>
</dbReference>
<dbReference type="PROSITE" id="PS01278">
    <property type="entry name" value="MTTASE_RADICAL"/>
    <property type="match status" value="1"/>
</dbReference>
<dbReference type="PROSITE" id="PS51918">
    <property type="entry name" value="RADICAL_SAM"/>
    <property type="match status" value="1"/>
</dbReference>
<dbReference type="PROSITE" id="PS50926">
    <property type="entry name" value="TRAM"/>
    <property type="match status" value="1"/>
</dbReference>
<evidence type="ECO:0000255" key="1">
    <source>
        <dbReference type="HAMAP-Rule" id="MF_01864"/>
    </source>
</evidence>
<evidence type="ECO:0000255" key="2">
    <source>
        <dbReference type="PROSITE-ProRule" id="PRU01266"/>
    </source>
</evidence>
<accession>B1IYE7</accession>
<name>MIAB_ECOLC</name>
<sequence>MTKKLHIKTWGCQMNEYDSSKMADLLDATHGYQLTDVAEEADVLLLNTCSIREKAQEKVFHQLGRWKLLKEKNPDLIIGVGGCVASQEGEHIRQRAHYVDIIFGPQTLHRLPEMINSVRGDRSPVVDISFPEIEKFDRLPEPRAEGPTAFVSIMEGCNKYCTYCVVPYTRGEEVSRPSDDILFEIAQLAAQGVREVNLLGQNVNAWRGENYDGTTGSFADLLRLVAAIDGIDRIRFTTSHPIEFTDDIIEVYRDTPELVSFLHLPVQSGSDRILNLMGRTHTALEYKAIIRKLRAARPDIQISSDFIVGFPGETTEDFEKTMKLIADVNFDMSYSFIFSARPGTPAADMVDDVPEEEKKQRLYILQERINQQAMAWSRRMLGTTQRILVEGTSRKSIMELSGRTENNRVVNFEGTPDMIGKFVDVEITDVYPNSLRGKVVRTEDEMGLRVAETPESVIARTRKENDLGVGYYQP</sequence>
<organism>
    <name type="scientific">Escherichia coli (strain ATCC 8739 / DSM 1576 / NBRC 3972 / NCIMB 8545 / WDCM 00012 / Crooks)</name>
    <dbReference type="NCBI Taxonomy" id="481805"/>
    <lineage>
        <taxon>Bacteria</taxon>
        <taxon>Pseudomonadati</taxon>
        <taxon>Pseudomonadota</taxon>
        <taxon>Gammaproteobacteria</taxon>
        <taxon>Enterobacterales</taxon>
        <taxon>Enterobacteriaceae</taxon>
        <taxon>Escherichia</taxon>
    </lineage>
</organism>
<proteinExistence type="inferred from homology"/>
<comment type="function">
    <text evidence="1">Catalyzes the methylthiolation of N6-(dimethylallyl)adenosine (i(6)A), leading to the formation of 2-methylthio-N6-(dimethylallyl)adenosine (ms(2)i(6)A) at position 37 in tRNAs that read codons beginning with uridine.</text>
</comment>
<comment type="catalytic activity">
    <reaction evidence="1">
        <text>N(6)-dimethylallyladenosine(37) in tRNA + (sulfur carrier)-SH + AH2 + 2 S-adenosyl-L-methionine = 2-methylsulfanyl-N(6)-dimethylallyladenosine(37) in tRNA + (sulfur carrier)-H + 5'-deoxyadenosine + L-methionine + A + S-adenosyl-L-homocysteine + 2 H(+)</text>
        <dbReference type="Rhea" id="RHEA:37067"/>
        <dbReference type="Rhea" id="RHEA-COMP:10375"/>
        <dbReference type="Rhea" id="RHEA-COMP:10376"/>
        <dbReference type="Rhea" id="RHEA-COMP:14737"/>
        <dbReference type="Rhea" id="RHEA-COMP:14739"/>
        <dbReference type="ChEBI" id="CHEBI:13193"/>
        <dbReference type="ChEBI" id="CHEBI:15378"/>
        <dbReference type="ChEBI" id="CHEBI:17319"/>
        <dbReference type="ChEBI" id="CHEBI:17499"/>
        <dbReference type="ChEBI" id="CHEBI:29917"/>
        <dbReference type="ChEBI" id="CHEBI:57844"/>
        <dbReference type="ChEBI" id="CHEBI:57856"/>
        <dbReference type="ChEBI" id="CHEBI:59789"/>
        <dbReference type="ChEBI" id="CHEBI:64428"/>
        <dbReference type="ChEBI" id="CHEBI:74415"/>
        <dbReference type="ChEBI" id="CHEBI:74417"/>
        <dbReference type="EC" id="2.8.4.3"/>
    </reaction>
</comment>
<comment type="cofactor">
    <cofactor evidence="1">
        <name>[4Fe-4S] cluster</name>
        <dbReference type="ChEBI" id="CHEBI:49883"/>
    </cofactor>
    <text evidence="1">Binds 2 [4Fe-4S] clusters. One cluster is coordinated with 3 cysteines and an exchangeable S-adenosyl-L-methionine.</text>
</comment>
<comment type="subunit">
    <text evidence="1">Monomer.</text>
</comment>
<comment type="subcellular location">
    <subcellularLocation>
        <location evidence="1">Cytoplasm</location>
    </subcellularLocation>
</comment>
<comment type="similarity">
    <text evidence="1">Belongs to the methylthiotransferase family. MiaB subfamily.</text>
</comment>
<gene>
    <name evidence="1" type="primary">miaB</name>
    <name type="ordered locus">EcolC_2984</name>
</gene>
<keyword id="KW-0004">4Fe-4S</keyword>
<keyword id="KW-0963">Cytoplasm</keyword>
<keyword id="KW-0408">Iron</keyword>
<keyword id="KW-0411">Iron-sulfur</keyword>
<keyword id="KW-0479">Metal-binding</keyword>
<keyword id="KW-0949">S-adenosyl-L-methionine</keyword>
<keyword id="KW-0808">Transferase</keyword>
<keyword id="KW-0819">tRNA processing</keyword>